<accession>Q0BKK9</accession>
<dbReference type="EC" id="2.7.1.30" evidence="1"/>
<dbReference type="EMBL" id="CP000437">
    <property type="protein sequence ID" value="ABI83375.1"/>
    <property type="molecule type" value="Genomic_DNA"/>
</dbReference>
<dbReference type="RefSeq" id="WP_003017064.1">
    <property type="nucleotide sequence ID" value="NC_017463.1"/>
</dbReference>
<dbReference type="SMR" id="Q0BKK9"/>
<dbReference type="KEGG" id="fth:FTH_1588"/>
<dbReference type="UniPathway" id="UPA00618">
    <property type="reaction ID" value="UER00672"/>
</dbReference>
<dbReference type="GO" id="GO:0005829">
    <property type="term" value="C:cytosol"/>
    <property type="evidence" value="ECO:0007669"/>
    <property type="project" value="TreeGrafter"/>
</dbReference>
<dbReference type="GO" id="GO:0005524">
    <property type="term" value="F:ATP binding"/>
    <property type="evidence" value="ECO:0007669"/>
    <property type="project" value="UniProtKB-UniRule"/>
</dbReference>
<dbReference type="GO" id="GO:0004370">
    <property type="term" value="F:glycerol kinase activity"/>
    <property type="evidence" value="ECO:0000250"/>
    <property type="project" value="UniProtKB"/>
</dbReference>
<dbReference type="GO" id="GO:0019563">
    <property type="term" value="P:glycerol catabolic process"/>
    <property type="evidence" value="ECO:0007669"/>
    <property type="project" value="UniProtKB-UniRule"/>
</dbReference>
<dbReference type="GO" id="GO:0006071">
    <property type="term" value="P:glycerol metabolic process"/>
    <property type="evidence" value="ECO:0000250"/>
    <property type="project" value="UniProtKB"/>
</dbReference>
<dbReference type="GO" id="GO:0006072">
    <property type="term" value="P:glycerol-3-phosphate metabolic process"/>
    <property type="evidence" value="ECO:0007669"/>
    <property type="project" value="InterPro"/>
</dbReference>
<dbReference type="CDD" id="cd07786">
    <property type="entry name" value="FGGY_EcGK_like"/>
    <property type="match status" value="1"/>
</dbReference>
<dbReference type="FunFam" id="3.30.420.40:FF:000007">
    <property type="entry name" value="Glycerol kinase"/>
    <property type="match status" value="1"/>
</dbReference>
<dbReference type="FunFam" id="3.30.420.40:FF:000008">
    <property type="entry name" value="Glycerol kinase"/>
    <property type="match status" value="1"/>
</dbReference>
<dbReference type="Gene3D" id="3.30.420.40">
    <property type="match status" value="2"/>
</dbReference>
<dbReference type="HAMAP" id="MF_00186">
    <property type="entry name" value="Glycerol_kin"/>
    <property type="match status" value="1"/>
</dbReference>
<dbReference type="InterPro" id="IPR043129">
    <property type="entry name" value="ATPase_NBD"/>
</dbReference>
<dbReference type="InterPro" id="IPR000577">
    <property type="entry name" value="Carb_kinase_FGGY"/>
</dbReference>
<dbReference type="InterPro" id="IPR018483">
    <property type="entry name" value="Carb_kinase_FGGY_CS"/>
</dbReference>
<dbReference type="InterPro" id="IPR018485">
    <property type="entry name" value="FGGY_C"/>
</dbReference>
<dbReference type="InterPro" id="IPR018484">
    <property type="entry name" value="FGGY_N"/>
</dbReference>
<dbReference type="InterPro" id="IPR005999">
    <property type="entry name" value="Glycerol_kin"/>
</dbReference>
<dbReference type="NCBIfam" id="TIGR01311">
    <property type="entry name" value="glycerol_kin"/>
    <property type="match status" value="1"/>
</dbReference>
<dbReference type="NCBIfam" id="NF000756">
    <property type="entry name" value="PRK00047.1"/>
    <property type="match status" value="1"/>
</dbReference>
<dbReference type="PANTHER" id="PTHR10196:SF69">
    <property type="entry name" value="GLYCEROL KINASE"/>
    <property type="match status" value="1"/>
</dbReference>
<dbReference type="PANTHER" id="PTHR10196">
    <property type="entry name" value="SUGAR KINASE"/>
    <property type="match status" value="1"/>
</dbReference>
<dbReference type="Pfam" id="PF02782">
    <property type="entry name" value="FGGY_C"/>
    <property type="match status" value="1"/>
</dbReference>
<dbReference type="Pfam" id="PF00370">
    <property type="entry name" value="FGGY_N"/>
    <property type="match status" value="1"/>
</dbReference>
<dbReference type="PIRSF" id="PIRSF000538">
    <property type="entry name" value="GlpK"/>
    <property type="match status" value="1"/>
</dbReference>
<dbReference type="SUPFAM" id="SSF53067">
    <property type="entry name" value="Actin-like ATPase domain"/>
    <property type="match status" value="2"/>
</dbReference>
<dbReference type="PROSITE" id="PS00933">
    <property type="entry name" value="FGGY_KINASES_1"/>
    <property type="match status" value="1"/>
</dbReference>
<dbReference type="PROSITE" id="PS00445">
    <property type="entry name" value="FGGY_KINASES_2"/>
    <property type="match status" value="1"/>
</dbReference>
<keyword id="KW-0067">ATP-binding</keyword>
<keyword id="KW-0319">Glycerol metabolism</keyword>
<keyword id="KW-0418">Kinase</keyword>
<keyword id="KW-0547">Nucleotide-binding</keyword>
<keyword id="KW-0808">Transferase</keyword>
<evidence type="ECO:0000255" key="1">
    <source>
        <dbReference type="HAMAP-Rule" id="MF_00186"/>
    </source>
</evidence>
<organism>
    <name type="scientific">Francisella tularensis subsp. holarctica (strain OSU18)</name>
    <dbReference type="NCBI Taxonomy" id="393011"/>
    <lineage>
        <taxon>Bacteria</taxon>
        <taxon>Pseudomonadati</taxon>
        <taxon>Pseudomonadota</taxon>
        <taxon>Gammaproteobacteria</taxon>
        <taxon>Thiotrichales</taxon>
        <taxon>Francisellaceae</taxon>
        <taxon>Francisella</taxon>
    </lineage>
</organism>
<proteinExistence type="inferred from homology"/>
<comment type="function">
    <text evidence="1">Key enzyme in the regulation of glycerol uptake and metabolism. Catalyzes the phosphorylation of glycerol to yield sn-glycerol 3-phosphate.</text>
</comment>
<comment type="catalytic activity">
    <reaction evidence="1">
        <text>glycerol + ATP = sn-glycerol 3-phosphate + ADP + H(+)</text>
        <dbReference type="Rhea" id="RHEA:21644"/>
        <dbReference type="ChEBI" id="CHEBI:15378"/>
        <dbReference type="ChEBI" id="CHEBI:17754"/>
        <dbReference type="ChEBI" id="CHEBI:30616"/>
        <dbReference type="ChEBI" id="CHEBI:57597"/>
        <dbReference type="ChEBI" id="CHEBI:456216"/>
        <dbReference type="EC" id="2.7.1.30"/>
    </reaction>
</comment>
<comment type="activity regulation">
    <text evidence="1">Inhibited by fructose 1,6-bisphosphate (FBP).</text>
</comment>
<comment type="pathway">
    <text evidence="1">Polyol metabolism; glycerol degradation via glycerol kinase pathway; sn-glycerol 3-phosphate from glycerol: step 1/1.</text>
</comment>
<comment type="similarity">
    <text evidence="1">Belongs to the FGGY kinase family.</text>
</comment>
<name>GLPK_FRATO</name>
<gene>
    <name evidence="1" type="primary">glpK</name>
    <name type="ordered locus">FTH_1588</name>
</gene>
<feature type="chain" id="PRO_1000058451" description="Glycerol kinase">
    <location>
        <begin position="1"/>
        <end position="502"/>
    </location>
</feature>
<feature type="binding site" evidence="1">
    <location>
        <position position="13"/>
    </location>
    <ligand>
        <name>ADP</name>
        <dbReference type="ChEBI" id="CHEBI:456216"/>
    </ligand>
</feature>
<feature type="binding site" evidence="1">
    <location>
        <position position="13"/>
    </location>
    <ligand>
        <name>ATP</name>
        <dbReference type="ChEBI" id="CHEBI:30616"/>
    </ligand>
</feature>
<feature type="binding site" evidence="1">
    <location>
        <position position="13"/>
    </location>
    <ligand>
        <name>sn-glycerol 3-phosphate</name>
        <dbReference type="ChEBI" id="CHEBI:57597"/>
    </ligand>
</feature>
<feature type="binding site" evidence="1">
    <location>
        <position position="14"/>
    </location>
    <ligand>
        <name>ATP</name>
        <dbReference type="ChEBI" id="CHEBI:30616"/>
    </ligand>
</feature>
<feature type="binding site" evidence="1">
    <location>
        <position position="15"/>
    </location>
    <ligand>
        <name>ATP</name>
        <dbReference type="ChEBI" id="CHEBI:30616"/>
    </ligand>
</feature>
<feature type="binding site" evidence="1">
    <location>
        <position position="17"/>
    </location>
    <ligand>
        <name>ADP</name>
        <dbReference type="ChEBI" id="CHEBI:456216"/>
    </ligand>
</feature>
<feature type="binding site" evidence="1">
    <location>
        <position position="83"/>
    </location>
    <ligand>
        <name>glycerol</name>
        <dbReference type="ChEBI" id="CHEBI:17754"/>
    </ligand>
</feature>
<feature type="binding site" evidence="1">
    <location>
        <position position="83"/>
    </location>
    <ligand>
        <name>sn-glycerol 3-phosphate</name>
        <dbReference type="ChEBI" id="CHEBI:57597"/>
    </ligand>
</feature>
<feature type="binding site" evidence="1">
    <location>
        <position position="84"/>
    </location>
    <ligand>
        <name>glycerol</name>
        <dbReference type="ChEBI" id="CHEBI:17754"/>
    </ligand>
</feature>
<feature type="binding site" evidence="1">
    <location>
        <position position="84"/>
    </location>
    <ligand>
        <name>sn-glycerol 3-phosphate</name>
        <dbReference type="ChEBI" id="CHEBI:57597"/>
    </ligand>
</feature>
<feature type="binding site" evidence="1">
    <location>
        <position position="136"/>
    </location>
    <ligand>
        <name>glycerol</name>
        <dbReference type="ChEBI" id="CHEBI:17754"/>
    </ligand>
</feature>
<feature type="binding site" evidence="1">
    <location>
        <position position="136"/>
    </location>
    <ligand>
        <name>sn-glycerol 3-phosphate</name>
        <dbReference type="ChEBI" id="CHEBI:57597"/>
    </ligand>
</feature>
<feature type="binding site" evidence="1">
    <location>
        <position position="246"/>
    </location>
    <ligand>
        <name>glycerol</name>
        <dbReference type="ChEBI" id="CHEBI:17754"/>
    </ligand>
</feature>
<feature type="binding site" evidence="1">
    <location>
        <position position="246"/>
    </location>
    <ligand>
        <name>sn-glycerol 3-phosphate</name>
        <dbReference type="ChEBI" id="CHEBI:57597"/>
    </ligand>
</feature>
<feature type="binding site" evidence="1">
    <location>
        <position position="247"/>
    </location>
    <ligand>
        <name>glycerol</name>
        <dbReference type="ChEBI" id="CHEBI:17754"/>
    </ligand>
</feature>
<feature type="binding site" evidence="1">
    <location>
        <position position="268"/>
    </location>
    <ligand>
        <name>ADP</name>
        <dbReference type="ChEBI" id="CHEBI:456216"/>
    </ligand>
</feature>
<feature type="binding site" evidence="1">
    <location>
        <position position="268"/>
    </location>
    <ligand>
        <name>ATP</name>
        <dbReference type="ChEBI" id="CHEBI:30616"/>
    </ligand>
</feature>
<feature type="binding site" evidence="1">
    <location>
        <position position="311"/>
    </location>
    <ligand>
        <name>ADP</name>
        <dbReference type="ChEBI" id="CHEBI:456216"/>
    </ligand>
</feature>
<feature type="binding site" evidence="1">
    <location>
        <position position="311"/>
    </location>
    <ligand>
        <name>ATP</name>
        <dbReference type="ChEBI" id="CHEBI:30616"/>
    </ligand>
</feature>
<feature type="binding site" evidence="1">
    <location>
        <position position="315"/>
    </location>
    <ligand>
        <name>ATP</name>
        <dbReference type="ChEBI" id="CHEBI:30616"/>
    </ligand>
</feature>
<feature type="binding site" evidence="1">
    <location>
        <position position="412"/>
    </location>
    <ligand>
        <name>ADP</name>
        <dbReference type="ChEBI" id="CHEBI:456216"/>
    </ligand>
</feature>
<feature type="binding site" evidence="1">
    <location>
        <position position="412"/>
    </location>
    <ligand>
        <name>ATP</name>
        <dbReference type="ChEBI" id="CHEBI:30616"/>
    </ligand>
</feature>
<feature type="binding site" evidence="1">
    <location>
        <position position="416"/>
    </location>
    <ligand>
        <name>ADP</name>
        <dbReference type="ChEBI" id="CHEBI:456216"/>
    </ligand>
</feature>
<protein>
    <recommendedName>
        <fullName evidence="1">Glycerol kinase</fullName>
        <ecNumber evidence="1">2.7.1.30</ecNumber>
    </recommendedName>
    <alternativeName>
        <fullName evidence="1">ATP:glycerol 3-phosphotransferase</fullName>
    </alternativeName>
    <alternativeName>
        <fullName evidence="1">Glycerokinase</fullName>
        <shortName evidence="1">GK</shortName>
    </alternativeName>
</protein>
<reference key="1">
    <citation type="journal article" date="2006" name="J. Bacteriol.">
        <title>Chromosome rearrangement and diversification of Francisella tularensis revealed by the type B (OSU18) genome sequence.</title>
        <authorList>
            <person name="Petrosino J.F."/>
            <person name="Xiang Q."/>
            <person name="Karpathy S.E."/>
            <person name="Jiang H."/>
            <person name="Yerrapragada S."/>
            <person name="Liu Y."/>
            <person name="Gioia J."/>
            <person name="Hemphill L."/>
            <person name="Gonzalez A."/>
            <person name="Raghavan T.M."/>
            <person name="Uzman A."/>
            <person name="Fox G.E."/>
            <person name="Highlander S."/>
            <person name="Reichard M."/>
            <person name="Morton R.J."/>
            <person name="Clinkenbeard K.D."/>
            <person name="Weinstock G.M."/>
        </authorList>
    </citation>
    <scope>NUCLEOTIDE SEQUENCE [LARGE SCALE GENOMIC DNA]</scope>
    <source>
        <strain>OSU18</strain>
    </source>
</reference>
<sequence>MSKDFILAIDQGTTSSRAIIFDKKGNIRKIAQKEFTQIYPKSGWVEHDAMEIWGTQSGVMREALEFGRVKPDQIAAIGITNQRETVVVWDKETGDPVYNAIVWQCRRTSSICDEIKRDPQFVKYIKENTGLVVDAYFSGTKVKWILDNVEGAREKANAGKLLMGTIDTWLIWNLTRGKVHATDYSNASRTMLFNINSLEWDKKILDYLNIPESMLPEVKNSSEVFGVTDSHTLGGAEIPIAGVAGDQHAALFGHCCFEKGMAKNTYGTGCFALMNVGDKPVYSDEGLLTTIAWAENGKPTYALEGSIFIVGAVIQWIRDGLGLVRSAEDSEYYATKIDSTNGVYLVPAFVGLGTPYWDMYARGTIVGITRDTKREHIIRAALEAIAYQAKDVLECMKEDTGLDLAGLRVDGGAVQNNFLMQFQSDILQSEISKPKINEITSLGAVFLAGLAVGFWKDKQELKSILTTEKVFEPQKDSQAVAHDYRGWKKAVERSKAWAECYS</sequence>